<keyword id="KW-0028">Amino-acid biosynthesis</keyword>
<keyword id="KW-0032">Aminotransferase</keyword>
<keyword id="KW-0368">Histidine biosynthesis</keyword>
<keyword id="KW-0663">Pyridoxal phosphate</keyword>
<keyword id="KW-0808">Transferase</keyword>
<proteinExistence type="inferred from homology"/>
<reference key="1">
    <citation type="journal article" date="2005" name="Science">
        <title>Extensive DNA inversions in the B. fragilis genome control variable gene expression.</title>
        <authorList>
            <person name="Cerdeno-Tarraga A.-M."/>
            <person name="Patrick S."/>
            <person name="Crossman L.C."/>
            <person name="Blakely G."/>
            <person name="Abratt V."/>
            <person name="Lennard N."/>
            <person name="Poxton I."/>
            <person name="Duerden B."/>
            <person name="Harris B."/>
            <person name="Quail M.A."/>
            <person name="Barron A."/>
            <person name="Clark L."/>
            <person name="Corton C."/>
            <person name="Doggett J."/>
            <person name="Holden M.T.G."/>
            <person name="Larke N."/>
            <person name="Line A."/>
            <person name="Lord A."/>
            <person name="Norbertczak H."/>
            <person name="Ormond D."/>
            <person name="Price C."/>
            <person name="Rabbinowitsch E."/>
            <person name="Woodward J."/>
            <person name="Barrell B.G."/>
            <person name="Parkhill J."/>
        </authorList>
    </citation>
    <scope>NUCLEOTIDE SEQUENCE [LARGE SCALE GENOMIC DNA]</scope>
    <source>
        <strain>ATCC 25285 / DSM 2151 / CCUG 4856 / JCM 11019 / LMG 10263 / NCTC 9343 / Onslow / VPI 2553 / EN-2</strain>
    </source>
</reference>
<feature type="chain" id="PRO_0000153313" description="Histidinol-phosphate aminotransferase">
    <location>
        <begin position="1"/>
        <end position="345"/>
    </location>
</feature>
<feature type="modified residue" description="N6-(pyridoxal phosphate)lysine" evidence="1">
    <location>
        <position position="206"/>
    </location>
</feature>
<accession>Q5LAZ9</accession>
<organism>
    <name type="scientific">Bacteroides fragilis (strain ATCC 25285 / DSM 2151 / CCUG 4856 / JCM 11019 / LMG 10263 / NCTC 9343 / Onslow / VPI 2553 / EN-2)</name>
    <dbReference type="NCBI Taxonomy" id="272559"/>
    <lineage>
        <taxon>Bacteria</taxon>
        <taxon>Pseudomonadati</taxon>
        <taxon>Bacteroidota</taxon>
        <taxon>Bacteroidia</taxon>
        <taxon>Bacteroidales</taxon>
        <taxon>Bacteroidaceae</taxon>
        <taxon>Bacteroides</taxon>
    </lineage>
</organism>
<evidence type="ECO:0000255" key="1">
    <source>
        <dbReference type="HAMAP-Rule" id="MF_01023"/>
    </source>
</evidence>
<gene>
    <name evidence="1" type="primary">hisC</name>
    <name type="ordered locus">BF3028</name>
</gene>
<comment type="catalytic activity">
    <reaction evidence="1">
        <text>L-histidinol phosphate + 2-oxoglutarate = 3-(imidazol-4-yl)-2-oxopropyl phosphate + L-glutamate</text>
        <dbReference type="Rhea" id="RHEA:23744"/>
        <dbReference type="ChEBI" id="CHEBI:16810"/>
        <dbReference type="ChEBI" id="CHEBI:29985"/>
        <dbReference type="ChEBI" id="CHEBI:57766"/>
        <dbReference type="ChEBI" id="CHEBI:57980"/>
        <dbReference type="EC" id="2.6.1.9"/>
    </reaction>
</comment>
<comment type="cofactor">
    <cofactor evidence="1">
        <name>pyridoxal 5'-phosphate</name>
        <dbReference type="ChEBI" id="CHEBI:597326"/>
    </cofactor>
</comment>
<comment type="pathway">
    <text evidence="1">Amino-acid biosynthesis; L-histidine biosynthesis; L-histidine from 5-phospho-alpha-D-ribose 1-diphosphate: step 7/9.</text>
</comment>
<comment type="subunit">
    <text evidence="1">Homodimer.</text>
</comment>
<comment type="similarity">
    <text evidence="1">Belongs to the class-II pyridoxal-phosphate-dependent aminotransferase family. Histidinol-phosphate aminotransferase subfamily.</text>
</comment>
<protein>
    <recommendedName>
        <fullName evidence="1">Histidinol-phosphate aminotransferase</fullName>
        <ecNumber evidence="1">2.6.1.9</ecNumber>
    </recommendedName>
    <alternativeName>
        <fullName evidence="1">Imidazole acetol-phosphate transaminase</fullName>
    </alternativeName>
</protein>
<name>HIS8_BACFN</name>
<sequence length="345" mass="39192">MKTLQELTRPNIWRLKPYSSARDEYSGAAASVFLDANENPYNLPHNRYPDPMQRDLKLELSKIKKVAPAHIFLGNGSDEAIDLVFRAFCEPGRDNVVAIDPTYGMYQVCADVNDVEYRKVLLHDDFQFSADELLAVADERTKMIFLCSPNNPTGNDLLRSEIIKVINDFEGLVILDEAYNDFSDEPSFLSELGKYPNLIILQTFSKAFGCAAIRLGMAFASEGIIGVLNKIKYPYNVNQLTQQQAIEMLHKYYEIERWVKTLKEERGYLEEAFVELPWVLQVFPSNANFFLARVTDAVKIYNYLVGEGIIVRNRNSISLCGNCLRVTVGTRAENAKLIGALKKYQ</sequence>
<dbReference type="EC" id="2.6.1.9" evidence="1"/>
<dbReference type="EMBL" id="CR626927">
    <property type="protein sequence ID" value="CAH08723.1"/>
    <property type="molecule type" value="Genomic_DNA"/>
</dbReference>
<dbReference type="RefSeq" id="WP_010993236.1">
    <property type="nucleotide sequence ID" value="NZ_UFTH01000001.1"/>
</dbReference>
<dbReference type="SMR" id="Q5LAZ9"/>
<dbReference type="PaxDb" id="272559-BF9343_2942"/>
<dbReference type="GeneID" id="60369588"/>
<dbReference type="KEGG" id="bfs:BF9343_2942"/>
<dbReference type="eggNOG" id="COG0079">
    <property type="taxonomic scope" value="Bacteria"/>
</dbReference>
<dbReference type="HOGENOM" id="CLU_017584_3_1_10"/>
<dbReference type="UniPathway" id="UPA00031">
    <property type="reaction ID" value="UER00012"/>
</dbReference>
<dbReference type="Proteomes" id="UP000006731">
    <property type="component" value="Chromosome"/>
</dbReference>
<dbReference type="GO" id="GO:0004400">
    <property type="term" value="F:histidinol-phosphate transaminase activity"/>
    <property type="evidence" value="ECO:0007669"/>
    <property type="project" value="UniProtKB-UniRule"/>
</dbReference>
<dbReference type="GO" id="GO:0030170">
    <property type="term" value="F:pyridoxal phosphate binding"/>
    <property type="evidence" value="ECO:0007669"/>
    <property type="project" value="InterPro"/>
</dbReference>
<dbReference type="GO" id="GO:0000105">
    <property type="term" value="P:L-histidine biosynthetic process"/>
    <property type="evidence" value="ECO:0007669"/>
    <property type="project" value="UniProtKB-UniRule"/>
</dbReference>
<dbReference type="CDD" id="cd00609">
    <property type="entry name" value="AAT_like"/>
    <property type="match status" value="1"/>
</dbReference>
<dbReference type="Gene3D" id="3.90.1150.10">
    <property type="entry name" value="Aspartate Aminotransferase, domain 1"/>
    <property type="match status" value="1"/>
</dbReference>
<dbReference type="Gene3D" id="3.40.640.10">
    <property type="entry name" value="Type I PLP-dependent aspartate aminotransferase-like (Major domain)"/>
    <property type="match status" value="1"/>
</dbReference>
<dbReference type="HAMAP" id="MF_01023">
    <property type="entry name" value="HisC_aminotrans_2"/>
    <property type="match status" value="1"/>
</dbReference>
<dbReference type="InterPro" id="IPR001917">
    <property type="entry name" value="Aminotrans_II_pyridoxalP_BS"/>
</dbReference>
<dbReference type="InterPro" id="IPR004839">
    <property type="entry name" value="Aminotransferase_I/II_large"/>
</dbReference>
<dbReference type="InterPro" id="IPR005861">
    <property type="entry name" value="HisP_aminotrans"/>
</dbReference>
<dbReference type="InterPro" id="IPR015424">
    <property type="entry name" value="PyrdxlP-dep_Trfase"/>
</dbReference>
<dbReference type="InterPro" id="IPR015421">
    <property type="entry name" value="PyrdxlP-dep_Trfase_major"/>
</dbReference>
<dbReference type="InterPro" id="IPR015422">
    <property type="entry name" value="PyrdxlP-dep_Trfase_small"/>
</dbReference>
<dbReference type="NCBIfam" id="TIGR01141">
    <property type="entry name" value="hisC"/>
    <property type="match status" value="1"/>
</dbReference>
<dbReference type="PANTHER" id="PTHR42885:SF2">
    <property type="entry name" value="HISTIDINOL-PHOSPHATE AMINOTRANSFERASE"/>
    <property type="match status" value="1"/>
</dbReference>
<dbReference type="PANTHER" id="PTHR42885">
    <property type="entry name" value="HISTIDINOL-PHOSPHATE AMINOTRANSFERASE-RELATED"/>
    <property type="match status" value="1"/>
</dbReference>
<dbReference type="Pfam" id="PF00155">
    <property type="entry name" value="Aminotran_1_2"/>
    <property type="match status" value="1"/>
</dbReference>
<dbReference type="SUPFAM" id="SSF53383">
    <property type="entry name" value="PLP-dependent transferases"/>
    <property type="match status" value="1"/>
</dbReference>
<dbReference type="PROSITE" id="PS00599">
    <property type="entry name" value="AA_TRANSFER_CLASS_2"/>
    <property type="match status" value="1"/>
</dbReference>